<sequence length="205" mass="23312">MKLGIDENYFELEENLLKEGYRFICGVDEAGRGPLAGPVFAAAVIMDREIIIEGVRDSKKLTPKKREKLFEEIVKESITYSVAMVDNKTIDEININNATFLAMKNAIEALELVPDIVLVDGYEIPDLNLPQKALIKGDRKSYSIACASILAKVSRDRFITQISSLYPVYKFEKHKGYGTKEHIRLILEYGPCEIHRKSFLKNILR</sequence>
<feature type="chain" id="PRO_0000334868" description="Ribonuclease HII">
    <location>
        <begin position="1"/>
        <end position="205"/>
    </location>
</feature>
<feature type="domain" description="RNase H type-2" evidence="2">
    <location>
        <begin position="22"/>
        <end position="205"/>
    </location>
</feature>
<feature type="binding site" evidence="1">
    <location>
        <position position="28"/>
    </location>
    <ligand>
        <name>a divalent metal cation</name>
        <dbReference type="ChEBI" id="CHEBI:60240"/>
    </ligand>
</feature>
<feature type="binding site" evidence="1">
    <location>
        <position position="29"/>
    </location>
    <ligand>
        <name>a divalent metal cation</name>
        <dbReference type="ChEBI" id="CHEBI:60240"/>
    </ligand>
</feature>
<feature type="binding site" evidence="1">
    <location>
        <position position="120"/>
    </location>
    <ligand>
        <name>a divalent metal cation</name>
        <dbReference type="ChEBI" id="CHEBI:60240"/>
    </ligand>
</feature>
<organism>
    <name type="scientific">Caldicellulosiruptor saccharolyticus (strain ATCC 43494 / DSM 8903 / Tp8T 6331)</name>
    <dbReference type="NCBI Taxonomy" id="351627"/>
    <lineage>
        <taxon>Bacteria</taxon>
        <taxon>Bacillati</taxon>
        <taxon>Bacillota</taxon>
        <taxon>Bacillota incertae sedis</taxon>
        <taxon>Caldicellulosiruptorales</taxon>
        <taxon>Caldicellulosiruptoraceae</taxon>
        <taxon>Caldicellulosiruptor</taxon>
    </lineage>
</organism>
<accession>A4XLE8</accession>
<keyword id="KW-0963">Cytoplasm</keyword>
<keyword id="KW-0255">Endonuclease</keyword>
<keyword id="KW-0378">Hydrolase</keyword>
<keyword id="KW-0464">Manganese</keyword>
<keyword id="KW-0479">Metal-binding</keyword>
<keyword id="KW-0540">Nuclease</keyword>
<proteinExistence type="inferred from homology"/>
<reference key="1">
    <citation type="submission" date="2007-04" db="EMBL/GenBank/DDBJ databases">
        <title>Genome sequence of the thermophilic hydrogen-producing bacterium Caldicellulosiruptor saccharolyticus DSM 8903.</title>
        <authorList>
            <person name="Copeland A."/>
            <person name="Lucas S."/>
            <person name="Lapidus A."/>
            <person name="Barry K."/>
            <person name="Detter J.C."/>
            <person name="Glavina del Rio T."/>
            <person name="Hammon N."/>
            <person name="Israni S."/>
            <person name="Dalin E."/>
            <person name="Tice H."/>
            <person name="Pitluck S."/>
            <person name="Kiss H."/>
            <person name="Brettin T."/>
            <person name="Bruce D."/>
            <person name="Han C."/>
            <person name="Schmutz J."/>
            <person name="Larimer F."/>
            <person name="Land M."/>
            <person name="Hauser L."/>
            <person name="Kyrpides N."/>
            <person name="Lykidis A."/>
            <person name="van de Werken H.J.G."/>
            <person name="Verhaart M.R.A."/>
            <person name="VanFossen A.L."/>
            <person name="Lewis D.L."/>
            <person name="Nichols J.D."/>
            <person name="Goorissen H.P."/>
            <person name="van Niel E.W.J."/>
            <person name="Stams F.J.M."/>
            <person name="Willquist K.U."/>
            <person name="Ward D.E."/>
            <person name="van der Oost J."/>
            <person name="Kelly R.M."/>
            <person name="Kengen S.M.W."/>
            <person name="Richardson P."/>
        </authorList>
    </citation>
    <scope>NUCLEOTIDE SEQUENCE [LARGE SCALE GENOMIC DNA]</scope>
    <source>
        <strain>ATCC 43494 / DSM 8903 / Tp8T 6331</strain>
    </source>
</reference>
<dbReference type="EC" id="3.1.26.4" evidence="1"/>
<dbReference type="EMBL" id="CP000679">
    <property type="protein sequence ID" value="ABP67733.1"/>
    <property type="molecule type" value="Genomic_DNA"/>
</dbReference>
<dbReference type="RefSeq" id="WP_011917664.1">
    <property type="nucleotide sequence ID" value="NC_009437.1"/>
</dbReference>
<dbReference type="SMR" id="A4XLE8"/>
<dbReference type="STRING" id="351627.Csac_2151"/>
<dbReference type="KEGG" id="csc:Csac_2151"/>
<dbReference type="eggNOG" id="COG0164">
    <property type="taxonomic scope" value="Bacteria"/>
</dbReference>
<dbReference type="HOGENOM" id="CLU_036532_2_1_9"/>
<dbReference type="OrthoDB" id="9803420at2"/>
<dbReference type="Proteomes" id="UP000000256">
    <property type="component" value="Chromosome"/>
</dbReference>
<dbReference type="GO" id="GO:0005737">
    <property type="term" value="C:cytoplasm"/>
    <property type="evidence" value="ECO:0007669"/>
    <property type="project" value="UniProtKB-SubCell"/>
</dbReference>
<dbReference type="GO" id="GO:0032299">
    <property type="term" value="C:ribonuclease H2 complex"/>
    <property type="evidence" value="ECO:0007669"/>
    <property type="project" value="TreeGrafter"/>
</dbReference>
<dbReference type="GO" id="GO:0030145">
    <property type="term" value="F:manganese ion binding"/>
    <property type="evidence" value="ECO:0007669"/>
    <property type="project" value="UniProtKB-UniRule"/>
</dbReference>
<dbReference type="GO" id="GO:0003723">
    <property type="term" value="F:RNA binding"/>
    <property type="evidence" value="ECO:0007669"/>
    <property type="project" value="InterPro"/>
</dbReference>
<dbReference type="GO" id="GO:0004523">
    <property type="term" value="F:RNA-DNA hybrid ribonuclease activity"/>
    <property type="evidence" value="ECO:0007669"/>
    <property type="project" value="UniProtKB-UniRule"/>
</dbReference>
<dbReference type="GO" id="GO:0043137">
    <property type="term" value="P:DNA replication, removal of RNA primer"/>
    <property type="evidence" value="ECO:0007669"/>
    <property type="project" value="TreeGrafter"/>
</dbReference>
<dbReference type="GO" id="GO:0006298">
    <property type="term" value="P:mismatch repair"/>
    <property type="evidence" value="ECO:0007669"/>
    <property type="project" value="TreeGrafter"/>
</dbReference>
<dbReference type="CDD" id="cd07182">
    <property type="entry name" value="RNase_HII_bacteria_HII_like"/>
    <property type="match status" value="1"/>
</dbReference>
<dbReference type="FunFam" id="3.30.420.10:FF:000006">
    <property type="entry name" value="Ribonuclease HII"/>
    <property type="match status" value="1"/>
</dbReference>
<dbReference type="Gene3D" id="3.30.420.10">
    <property type="entry name" value="Ribonuclease H-like superfamily/Ribonuclease H"/>
    <property type="match status" value="1"/>
</dbReference>
<dbReference type="HAMAP" id="MF_00052_B">
    <property type="entry name" value="RNase_HII_B"/>
    <property type="match status" value="1"/>
</dbReference>
<dbReference type="InterPro" id="IPR022898">
    <property type="entry name" value="RNase_HII"/>
</dbReference>
<dbReference type="InterPro" id="IPR001352">
    <property type="entry name" value="RNase_HII/HIII"/>
</dbReference>
<dbReference type="InterPro" id="IPR024567">
    <property type="entry name" value="RNase_HII/HIII_dom"/>
</dbReference>
<dbReference type="InterPro" id="IPR012337">
    <property type="entry name" value="RNaseH-like_sf"/>
</dbReference>
<dbReference type="InterPro" id="IPR036397">
    <property type="entry name" value="RNaseH_sf"/>
</dbReference>
<dbReference type="NCBIfam" id="NF000594">
    <property type="entry name" value="PRK00015.1-1"/>
    <property type="match status" value="1"/>
</dbReference>
<dbReference type="NCBIfam" id="NF000595">
    <property type="entry name" value="PRK00015.1-3"/>
    <property type="match status" value="1"/>
</dbReference>
<dbReference type="PANTHER" id="PTHR10954">
    <property type="entry name" value="RIBONUCLEASE H2 SUBUNIT A"/>
    <property type="match status" value="1"/>
</dbReference>
<dbReference type="PANTHER" id="PTHR10954:SF18">
    <property type="entry name" value="RIBONUCLEASE HII"/>
    <property type="match status" value="1"/>
</dbReference>
<dbReference type="Pfam" id="PF01351">
    <property type="entry name" value="RNase_HII"/>
    <property type="match status" value="1"/>
</dbReference>
<dbReference type="SUPFAM" id="SSF53098">
    <property type="entry name" value="Ribonuclease H-like"/>
    <property type="match status" value="1"/>
</dbReference>
<dbReference type="PROSITE" id="PS51975">
    <property type="entry name" value="RNASE_H_2"/>
    <property type="match status" value="1"/>
</dbReference>
<name>RNH2_CALS8</name>
<comment type="function">
    <text evidence="1">Endonuclease that specifically degrades the RNA of RNA-DNA hybrids.</text>
</comment>
<comment type="catalytic activity">
    <reaction evidence="1">
        <text>Endonucleolytic cleavage to 5'-phosphomonoester.</text>
        <dbReference type="EC" id="3.1.26.4"/>
    </reaction>
</comment>
<comment type="cofactor">
    <cofactor evidence="1">
        <name>Mn(2+)</name>
        <dbReference type="ChEBI" id="CHEBI:29035"/>
    </cofactor>
    <cofactor evidence="1">
        <name>Mg(2+)</name>
        <dbReference type="ChEBI" id="CHEBI:18420"/>
    </cofactor>
    <text evidence="1">Manganese or magnesium. Binds 1 divalent metal ion per monomer in the absence of substrate. May bind a second metal ion after substrate binding.</text>
</comment>
<comment type="subcellular location">
    <subcellularLocation>
        <location evidence="1">Cytoplasm</location>
    </subcellularLocation>
</comment>
<comment type="similarity">
    <text evidence="1">Belongs to the RNase HII family.</text>
</comment>
<protein>
    <recommendedName>
        <fullName evidence="1">Ribonuclease HII</fullName>
        <shortName evidence="1">RNase HII</shortName>
        <ecNumber evidence="1">3.1.26.4</ecNumber>
    </recommendedName>
</protein>
<evidence type="ECO:0000255" key="1">
    <source>
        <dbReference type="HAMAP-Rule" id="MF_00052"/>
    </source>
</evidence>
<evidence type="ECO:0000255" key="2">
    <source>
        <dbReference type="PROSITE-ProRule" id="PRU01319"/>
    </source>
</evidence>
<gene>
    <name evidence="1" type="primary">rnhB</name>
    <name type="ordered locus">Csac_2151</name>
</gene>